<accession>P61598</accession>
<accession>Q99RD7</accession>
<keyword id="KW-0134">Cell wall</keyword>
<keyword id="KW-0572">Peptidoglycan-anchor</keyword>
<keyword id="KW-0677">Repeat</keyword>
<keyword id="KW-0964">Secreted</keyword>
<keyword id="KW-0732">Signal</keyword>
<sequence>MRDKKGPVNKRVDFLSNKLNKYSIRKFTVGTASILIGSLMYLGTQQEAEAAENNIENPTTLKDNVQSKEVKIEEVTNKDTAPQGVEAKSEVTSNKDTIEHEASVKAEDISKKEDTPKEVANVAEVQPKSSVTHNAEAPKVRKARSVDEGSFDITRDSKNVVESTPITIQGKEHFEGYGSVDIQKNPTDLGVSEVTRFNVGNESNGLIGALQLKNKIDFSKDFNFKVRVANNHQSNTTGADGWGFLFSKGNAEEYLTNGGILGDKGLVNSGGFKIDTGYIYTSSMDKTEKQAGQGYRGYGAFVKNDSSGNSQMVGENIDKSKTNFLNYADNSTNTSDGKFHGQRLNDVILTYVASTGKMRAEYAGKTWETSITDLGLSKNQAYNFLITSSQRWGLNQGINANGWMRTDLKGSEFTFTPSAKNNNRIRKKVEEIPFKKERKFNPDLAPGTEKVTREGQKGEKTITTPTLKNPLTGEIISKGESKEEITKDPINELTEYGPETIAPGHRDEFDPKLPTGEKEEVPGKPGIKNPETGDVVRPPVDSVTKYGPVKGDSIVEKEEIPFEKERKFNPDLAPGTEKVTREGQKGEKTITTPTLKNPLTGEIISKGESKEEITKDPINELTEYGPETIAPGHRDEFDPKLPTGEKEEVPGKPGIKNPETGDVVRPPVDSVTKYGPVKGDSIVEKEEIPFEKERKFNPDLAPGTEKVTREGQKGEKTITTPTLKNPLTGEIISKGESKEEITKDPINELTEYGPETIAPGHRDEFDPKLPTGEKEEVPGKPGIKNPETGDVVRPPVDSVTKYGPVKGDSIVEKEEIPFEKERKFNPDLAPGTEKVTREGQKGEKTITTPTLKNPLTGEIISKGESKEEITKDPINELTEYGPETIAPGHRDEFDPKLPTGEKEEVPGKPGIKNPETGDVVRPPVDSVTKYGPVKGDSIVEKEEIPFKKERKFNPDLAPGTEKVTREGQKGEKTITTPTLKNPLTGEIISKGESKEEITKDPINELTEYGPETITPGHRDEFDPKLPTGEKEEVPGKPGIKNPETGDVVRPPVDSVTKYGPVKGDSIVEKEEIPFEKERKFNPDLAPGTEKVTREGQKGEKTITTPTLKNPLTGEIISKGESKEEITKDPVNELTEFGGEKIPQGHKDIFDPNLPTDQTEKVPGKPGIKNPDTGKVIEEPVDDVIKHGPKTGTPETKTVEIPFETKREFNPKLQPGEERVKQEGQPGSKTITTPITVNPLTGEKVGEGQPTEEITKQPVDKIVEFGGEKPKDPKGPENPEKPSRPTHPSGPVNPNNPGLSKDRAKPNGPVHSMDKNDKVKKSKIAKESVANQEKKRAELPKTGLESTQKGLIFSSIIGIAGLMLLARRRKN</sequence>
<comment type="subcellular location">
    <subcellularLocation>
        <location evidence="3">Secreted</location>
        <location evidence="3">Cell wall</location>
        <topology evidence="3">Peptidoglycan-anchor</topology>
    </subcellularLocation>
</comment>
<comment type="sequence caution" evidence="5">
    <conflict type="frameshift">
        <sequence resource="EMBL-CDS" id="BAB43588"/>
    </conflict>
</comment>
<evidence type="ECO:0000255" key="1"/>
<evidence type="ECO:0000255" key="2">
    <source>
        <dbReference type="PROSITE-ProRule" id="PRU00437"/>
    </source>
</evidence>
<evidence type="ECO:0000255" key="3">
    <source>
        <dbReference type="PROSITE-ProRule" id="PRU00477"/>
    </source>
</evidence>
<evidence type="ECO:0000256" key="4">
    <source>
        <dbReference type="SAM" id="MobiDB-lite"/>
    </source>
</evidence>
<evidence type="ECO:0000305" key="5"/>
<name>PLS_STAAN</name>
<organism>
    <name type="scientific">Staphylococcus aureus (strain N315)</name>
    <dbReference type="NCBI Taxonomy" id="158879"/>
    <lineage>
        <taxon>Bacteria</taxon>
        <taxon>Bacillati</taxon>
        <taxon>Bacillota</taxon>
        <taxon>Bacilli</taxon>
        <taxon>Bacillales</taxon>
        <taxon>Staphylococcaceae</taxon>
        <taxon>Staphylococcus</taxon>
    </lineage>
</organism>
<reference key="1">
    <citation type="journal article" date="2001" name="Lancet">
        <title>Whole genome sequencing of meticillin-resistant Staphylococcus aureus.</title>
        <authorList>
            <person name="Kuroda M."/>
            <person name="Ohta T."/>
            <person name="Uchiyama I."/>
            <person name="Baba T."/>
            <person name="Yuzawa H."/>
            <person name="Kobayashi I."/>
            <person name="Cui L."/>
            <person name="Oguchi A."/>
            <person name="Aoki K."/>
            <person name="Nagai Y."/>
            <person name="Lian J.-Q."/>
            <person name="Ito T."/>
            <person name="Kanamori M."/>
            <person name="Matsumaru H."/>
            <person name="Maruyama A."/>
            <person name="Murakami H."/>
            <person name="Hosoyama A."/>
            <person name="Mizutani-Ui Y."/>
            <person name="Takahashi N.K."/>
            <person name="Sawano T."/>
            <person name="Inoue R."/>
            <person name="Kaito C."/>
            <person name="Sekimizu K."/>
            <person name="Hirakawa H."/>
            <person name="Kuhara S."/>
            <person name="Goto S."/>
            <person name="Yabuzaki J."/>
            <person name="Kanehisa M."/>
            <person name="Yamashita A."/>
            <person name="Oshima K."/>
            <person name="Furuya K."/>
            <person name="Yoshino C."/>
            <person name="Shiba T."/>
            <person name="Hattori M."/>
            <person name="Ogasawara N."/>
            <person name="Hayashi H."/>
            <person name="Hiramatsu K."/>
        </authorList>
    </citation>
    <scope>NUCLEOTIDE SEQUENCE [LARGE SCALE GENOMIC DNA]</scope>
    <source>
        <strain>N315</strain>
    </source>
</reference>
<reference key="2">
    <citation type="submission" date="2007-10" db="UniProtKB">
        <title>Shotgun proteomic analysis of total and membrane protein extracts of S. aureus strain N315.</title>
        <authorList>
            <person name="Vaezzadeh A.R."/>
            <person name="Deshusses J."/>
            <person name="Lescuyer P."/>
            <person name="Hochstrasser D.F."/>
        </authorList>
    </citation>
    <scope>IDENTIFICATION BY MASS SPECTROMETRY [LARGE SCALE ANALYSIS]</scope>
    <source>
        <strain>N315</strain>
    </source>
</reference>
<proteinExistence type="evidence at protein level"/>
<dbReference type="EMBL" id="BA000018">
    <property type="protein sequence ID" value="BAB43588.1"/>
    <property type="status" value="ALT_FRAME"/>
    <property type="molecule type" value="Genomic_DNA"/>
</dbReference>
<dbReference type="PIR" id="B90053">
    <property type="entry name" value="B90053"/>
</dbReference>
<dbReference type="SMR" id="P61598"/>
<dbReference type="EnsemblBacteria" id="BAB43588">
    <property type="protein sequence ID" value="BAB43588"/>
    <property type="gene ID" value="BAB43588"/>
</dbReference>
<dbReference type="KEGG" id="sau:SA2285"/>
<dbReference type="HOGENOM" id="CLU_000977_2_0_9"/>
<dbReference type="GO" id="GO:0005576">
    <property type="term" value="C:extracellular region"/>
    <property type="evidence" value="ECO:0007669"/>
    <property type="project" value="UniProtKB-KW"/>
</dbReference>
<dbReference type="Gene3D" id="2.20.230.30">
    <property type="match status" value="4"/>
</dbReference>
<dbReference type="Gene3D" id="2.60.120.200">
    <property type="match status" value="1"/>
</dbReference>
<dbReference type="Gene3D" id="2.20.230.10">
    <property type="entry name" value="Resuscitation-promoting factor rpfb"/>
    <property type="match status" value="1"/>
</dbReference>
<dbReference type="InterPro" id="IPR011098">
    <property type="entry name" value="G5_dom"/>
</dbReference>
<dbReference type="InterPro" id="IPR050436">
    <property type="entry name" value="IsdA"/>
</dbReference>
<dbReference type="InterPro" id="IPR019931">
    <property type="entry name" value="LPXTG_anchor"/>
</dbReference>
<dbReference type="InterPro" id="IPR031477">
    <property type="entry name" value="SasG_E"/>
</dbReference>
<dbReference type="InterPro" id="IPR005877">
    <property type="entry name" value="YSIRK_signal_dom"/>
</dbReference>
<dbReference type="NCBIfam" id="TIGR01167">
    <property type="entry name" value="LPXTG_anchor"/>
    <property type="match status" value="1"/>
</dbReference>
<dbReference type="NCBIfam" id="TIGR01168">
    <property type="entry name" value="YSIRK_signal"/>
    <property type="match status" value="1"/>
</dbReference>
<dbReference type="PANTHER" id="PTHR37824">
    <property type="entry name" value="IRON-REGULATED SURFACE DETERMINANT PROTEIN C"/>
    <property type="match status" value="1"/>
</dbReference>
<dbReference type="PANTHER" id="PTHR37824:SF1">
    <property type="entry name" value="IRON-REGULATED SURFACE DETERMINANT PROTEIN C"/>
    <property type="match status" value="1"/>
</dbReference>
<dbReference type="Pfam" id="PF07501">
    <property type="entry name" value="G5"/>
    <property type="match status" value="7"/>
</dbReference>
<dbReference type="Pfam" id="PF00746">
    <property type="entry name" value="Gram_pos_anchor"/>
    <property type="match status" value="1"/>
</dbReference>
<dbReference type="Pfam" id="PF18483">
    <property type="entry name" value="Lectin_L-type_dom"/>
    <property type="match status" value="1"/>
</dbReference>
<dbReference type="Pfam" id="PF17041">
    <property type="entry name" value="SasG_E"/>
    <property type="match status" value="6"/>
</dbReference>
<dbReference type="Pfam" id="PF04650">
    <property type="entry name" value="YSIRK_signal"/>
    <property type="match status" value="1"/>
</dbReference>
<dbReference type="SMART" id="SM01208">
    <property type="entry name" value="G5"/>
    <property type="match status" value="7"/>
</dbReference>
<dbReference type="PROSITE" id="PS51109">
    <property type="entry name" value="G5"/>
    <property type="match status" value="7"/>
</dbReference>
<dbReference type="PROSITE" id="PS50847">
    <property type="entry name" value="GRAM_POS_ANCHORING"/>
    <property type="match status" value="1"/>
</dbReference>
<protein>
    <recommendedName>
        <fullName>Putative surface protein SA2285</fullName>
    </recommendedName>
</protein>
<gene>
    <name type="ordered locus">SA2285</name>
</gene>
<feature type="signal peptide" evidence="1">
    <location>
        <begin position="1"/>
        <end position="50"/>
    </location>
</feature>
<feature type="chain" id="PRO_0000005635" description="Putative surface protein SA2285">
    <location>
        <begin position="51"/>
        <end position="1341"/>
    </location>
</feature>
<feature type="propeptide" id="PRO_0000005636" description="Removed by sortase" evidence="3">
    <location>
        <begin position="1342"/>
        <end position="1370"/>
    </location>
</feature>
<feature type="domain" description="G5 1" evidence="2">
    <location>
        <begin position="418"/>
        <end position="500"/>
    </location>
</feature>
<feature type="domain" description="G5 2" evidence="2">
    <location>
        <begin position="546"/>
        <end position="628"/>
    </location>
</feature>
<feature type="domain" description="G5 3" evidence="2">
    <location>
        <begin position="674"/>
        <end position="756"/>
    </location>
</feature>
<feature type="domain" description="G5 4" evidence="2">
    <location>
        <begin position="802"/>
        <end position="884"/>
    </location>
</feature>
<feature type="domain" description="G5 5" evidence="2">
    <location>
        <begin position="930"/>
        <end position="1012"/>
    </location>
</feature>
<feature type="domain" description="G5 6" evidence="2">
    <location>
        <begin position="1058"/>
        <end position="1140"/>
    </location>
</feature>
<feature type="domain" description="G5 7" evidence="2">
    <location>
        <begin position="1186"/>
        <end position="1268"/>
    </location>
</feature>
<feature type="region of interest" description="Disordered" evidence="4">
    <location>
        <begin position="77"/>
        <end position="116"/>
    </location>
</feature>
<feature type="region of interest" description="Disordered" evidence="4">
    <location>
        <begin position="439"/>
        <end position="472"/>
    </location>
</feature>
<feature type="region of interest" description="Disordered" evidence="4">
    <location>
        <begin position="495"/>
        <end position="1344"/>
    </location>
</feature>
<feature type="short sequence motif" description="LPXTG sorting signal" evidence="3">
    <location>
        <begin position="1338"/>
        <end position="1342"/>
    </location>
</feature>
<feature type="compositionally biased region" description="Basic and acidic residues" evidence="4">
    <location>
        <begin position="96"/>
        <end position="116"/>
    </location>
</feature>
<feature type="compositionally biased region" description="Basic and acidic residues" evidence="4">
    <location>
        <begin position="450"/>
        <end position="460"/>
    </location>
</feature>
<feature type="compositionally biased region" description="Basic and acidic residues" evidence="4">
    <location>
        <begin position="504"/>
        <end position="522"/>
    </location>
</feature>
<feature type="compositionally biased region" description="Basic and acidic residues" evidence="4">
    <location>
        <begin position="553"/>
        <end position="569"/>
    </location>
</feature>
<feature type="compositionally biased region" description="Basic and acidic residues" evidence="4">
    <location>
        <begin position="578"/>
        <end position="588"/>
    </location>
</feature>
<feature type="compositionally biased region" description="Basic and acidic residues" evidence="4">
    <location>
        <begin position="605"/>
        <end position="618"/>
    </location>
</feature>
<feature type="compositionally biased region" description="Basic and acidic residues" evidence="4">
    <location>
        <begin position="632"/>
        <end position="650"/>
    </location>
</feature>
<feature type="compositionally biased region" description="Basic and acidic residues" evidence="4">
    <location>
        <begin position="681"/>
        <end position="697"/>
    </location>
</feature>
<feature type="compositionally biased region" description="Basic and acidic residues" evidence="4">
    <location>
        <begin position="706"/>
        <end position="716"/>
    </location>
</feature>
<feature type="compositionally biased region" description="Basic and acidic residues" evidence="4">
    <location>
        <begin position="733"/>
        <end position="746"/>
    </location>
</feature>
<feature type="compositionally biased region" description="Basic and acidic residues" evidence="4">
    <location>
        <begin position="760"/>
        <end position="778"/>
    </location>
</feature>
<feature type="compositionally biased region" description="Basic and acidic residues" evidence="4">
    <location>
        <begin position="809"/>
        <end position="825"/>
    </location>
</feature>
<feature type="compositionally biased region" description="Basic and acidic residues" evidence="4">
    <location>
        <begin position="834"/>
        <end position="844"/>
    </location>
</feature>
<feature type="compositionally biased region" description="Basic and acidic residues" evidence="4">
    <location>
        <begin position="861"/>
        <end position="874"/>
    </location>
</feature>
<feature type="compositionally biased region" description="Basic and acidic residues" evidence="4">
    <location>
        <begin position="888"/>
        <end position="906"/>
    </location>
</feature>
<feature type="compositionally biased region" description="Basic and acidic residues" evidence="4">
    <location>
        <begin position="937"/>
        <end position="953"/>
    </location>
</feature>
<feature type="compositionally biased region" description="Basic and acidic residues" evidence="4">
    <location>
        <begin position="962"/>
        <end position="972"/>
    </location>
</feature>
<feature type="compositionally biased region" description="Basic and acidic residues" evidence="4">
    <location>
        <begin position="989"/>
        <end position="1002"/>
    </location>
</feature>
<feature type="compositionally biased region" description="Basic and acidic residues" evidence="4">
    <location>
        <begin position="1016"/>
        <end position="1034"/>
    </location>
</feature>
<feature type="compositionally biased region" description="Basic and acidic residues" evidence="4">
    <location>
        <begin position="1065"/>
        <end position="1081"/>
    </location>
</feature>
<feature type="compositionally biased region" description="Basic and acidic residues" evidence="4">
    <location>
        <begin position="1090"/>
        <end position="1100"/>
    </location>
</feature>
<feature type="compositionally biased region" description="Basic and acidic residues" evidence="4">
    <location>
        <begin position="1117"/>
        <end position="1130"/>
    </location>
</feature>
<feature type="compositionally biased region" description="Basic and acidic residues" evidence="4">
    <location>
        <begin position="1174"/>
        <end position="1185"/>
    </location>
</feature>
<feature type="compositionally biased region" description="Basic and acidic residues" evidence="4">
    <location>
        <begin position="1202"/>
        <end position="1221"/>
    </location>
</feature>
<feature type="compositionally biased region" description="Polar residues" evidence="4">
    <location>
        <begin position="1224"/>
        <end position="1238"/>
    </location>
</feature>
<feature type="compositionally biased region" description="Basic and acidic residues" evidence="4">
    <location>
        <begin position="1252"/>
        <end position="1282"/>
    </location>
</feature>
<feature type="modified residue" description="Pentaglycyl murein peptidoglycan amidated threonine" evidence="3">
    <location>
        <position position="1341"/>
    </location>
</feature>